<feature type="chain" id="PRO_1000059895" description="Beta-hexosaminidase">
    <location>
        <begin position="1"/>
        <end position="341"/>
    </location>
</feature>
<feature type="active site" description="Proton donor/acceptor" evidence="1">
    <location>
        <position position="176"/>
    </location>
</feature>
<feature type="active site" description="Nucleophile" evidence="1">
    <location>
        <position position="248"/>
    </location>
</feature>
<feature type="binding site" evidence="1">
    <location>
        <position position="62"/>
    </location>
    <ligand>
        <name>substrate</name>
    </ligand>
</feature>
<feature type="binding site" evidence="1">
    <location>
        <position position="70"/>
    </location>
    <ligand>
        <name>substrate</name>
    </ligand>
</feature>
<feature type="binding site" evidence="1">
    <location>
        <position position="133"/>
    </location>
    <ligand>
        <name>substrate</name>
    </ligand>
</feature>
<feature type="binding site" evidence="1">
    <location>
        <begin position="163"/>
        <end position="164"/>
    </location>
    <ligand>
        <name>substrate</name>
    </ligand>
</feature>
<feature type="site" description="Important for catalytic activity" evidence="1">
    <location>
        <position position="174"/>
    </location>
</feature>
<organism>
    <name type="scientific">Escherichia coli O139:H28 (strain E24377A / ETEC)</name>
    <dbReference type="NCBI Taxonomy" id="331111"/>
    <lineage>
        <taxon>Bacteria</taxon>
        <taxon>Pseudomonadati</taxon>
        <taxon>Pseudomonadota</taxon>
        <taxon>Gammaproteobacteria</taxon>
        <taxon>Enterobacterales</taxon>
        <taxon>Enterobacteriaceae</taxon>
        <taxon>Escherichia</taxon>
    </lineage>
</organism>
<accession>A7ZKL1</accession>
<gene>
    <name evidence="1" type="primary">nagZ</name>
    <name type="ordered locus">EcE24377A_1229</name>
</gene>
<sequence length="341" mass="37565">MGPVMLDVKGYELDAEEREILAHPLVGGLILFTRNYHDPAQLRELVRQIRAASRNHLVVAVDQEGGRVQRFREGFTRLPAAQSFAALSGMEEGGKLAQEAGWLMASEMIAMDIDISFAPVLDVGHISAAIGERSYHADPQKALAIASRFIDGMHEAGMKTTGKHFPGHGAVTADSHKETPCDPRPQAEIRAKDMSVFSSLIRENKLDAIMPAHVIYSDVDSRPASGSPYWLKTVLRQELGFDGVIFSDDLSMEGAAIMGSYAERGQASLDAGCDMILVCNNRKGAVSVLDNLSPIKAERVTRLYHKGSFSRQELMDSARWKAISTRLNQLHERWQEEKAGH</sequence>
<comment type="function">
    <text evidence="1">Plays a role in peptidoglycan recycling by cleaving the terminal beta-1,4-linked N-acetylglucosamine (GlcNAc) from peptide-linked peptidoglycan fragments, giving rise to free GlcNAc, anhydro-N-acetylmuramic acid and anhydro-N-acetylmuramic acid-linked peptides.</text>
</comment>
<comment type="catalytic activity">
    <reaction evidence="1">
        <text>Hydrolysis of terminal non-reducing N-acetyl-D-hexosamine residues in N-acetyl-beta-D-hexosaminides.</text>
        <dbReference type="EC" id="3.2.1.52"/>
    </reaction>
</comment>
<comment type="pathway">
    <text evidence="1">Cell wall biogenesis; peptidoglycan recycling.</text>
</comment>
<comment type="subcellular location">
    <subcellularLocation>
        <location evidence="1">Cytoplasm</location>
    </subcellularLocation>
</comment>
<comment type="similarity">
    <text evidence="1">Belongs to the glycosyl hydrolase 3 family. NagZ subfamily.</text>
</comment>
<protein>
    <recommendedName>
        <fullName evidence="1">Beta-hexosaminidase</fullName>
        <ecNumber evidence="1">3.2.1.52</ecNumber>
    </recommendedName>
    <alternativeName>
        <fullName evidence="1">Beta-N-acetylhexosaminidase</fullName>
    </alternativeName>
    <alternativeName>
        <fullName evidence="1">N-acetyl-beta-glucosaminidase</fullName>
    </alternativeName>
</protein>
<evidence type="ECO:0000255" key="1">
    <source>
        <dbReference type="HAMAP-Rule" id="MF_00364"/>
    </source>
</evidence>
<reference key="1">
    <citation type="journal article" date="2008" name="J. Bacteriol.">
        <title>The pangenome structure of Escherichia coli: comparative genomic analysis of E. coli commensal and pathogenic isolates.</title>
        <authorList>
            <person name="Rasko D.A."/>
            <person name="Rosovitz M.J."/>
            <person name="Myers G.S.A."/>
            <person name="Mongodin E.F."/>
            <person name="Fricke W.F."/>
            <person name="Gajer P."/>
            <person name="Crabtree J."/>
            <person name="Sebaihia M."/>
            <person name="Thomson N.R."/>
            <person name="Chaudhuri R."/>
            <person name="Henderson I.R."/>
            <person name="Sperandio V."/>
            <person name="Ravel J."/>
        </authorList>
    </citation>
    <scope>NUCLEOTIDE SEQUENCE [LARGE SCALE GENOMIC DNA]</scope>
    <source>
        <strain>E24377A / ETEC</strain>
    </source>
</reference>
<dbReference type="EC" id="3.2.1.52" evidence="1"/>
<dbReference type="EMBL" id="CP000800">
    <property type="protein sequence ID" value="ABV19560.1"/>
    <property type="molecule type" value="Genomic_DNA"/>
</dbReference>
<dbReference type="RefSeq" id="WP_000529332.1">
    <property type="nucleotide sequence ID" value="NC_009801.1"/>
</dbReference>
<dbReference type="SMR" id="A7ZKL1"/>
<dbReference type="CAZy" id="GH3">
    <property type="family name" value="Glycoside Hydrolase Family 3"/>
</dbReference>
<dbReference type="KEGG" id="ecw:EcE24377A_1229"/>
<dbReference type="HOGENOM" id="CLU_008392_0_0_6"/>
<dbReference type="UniPathway" id="UPA00544"/>
<dbReference type="Proteomes" id="UP000001122">
    <property type="component" value="Chromosome"/>
</dbReference>
<dbReference type="GO" id="GO:0005737">
    <property type="term" value="C:cytoplasm"/>
    <property type="evidence" value="ECO:0007669"/>
    <property type="project" value="UniProtKB-SubCell"/>
</dbReference>
<dbReference type="GO" id="GO:0004563">
    <property type="term" value="F:beta-N-acetylhexosaminidase activity"/>
    <property type="evidence" value="ECO:0007669"/>
    <property type="project" value="UniProtKB-UniRule"/>
</dbReference>
<dbReference type="GO" id="GO:0005975">
    <property type="term" value="P:carbohydrate metabolic process"/>
    <property type="evidence" value="ECO:0007669"/>
    <property type="project" value="InterPro"/>
</dbReference>
<dbReference type="GO" id="GO:0051301">
    <property type="term" value="P:cell division"/>
    <property type="evidence" value="ECO:0007669"/>
    <property type="project" value="UniProtKB-KW"/>
</dbReference>
<dbReference type="GO" id="GO:0071555">
    <property type="term" value="P:cell wall organization"/>
    <property type="evidence" value="ECO:0007669"/>
    <property type="project" value="UniProtKB-KW"/>
</dbReference>
<dbReference type="GO" id="GO:0009252">
    <property type="term" value="P:peptidoglycan biosynthetic process"/>
    <property type="evidence" value="ECO:0007669"/>
    <property type="project" value="UniProtKB-KW"/>
</dbReference>
<dbReference type="GO" id="GO:0009254">
    <property type="term" value="P:peptidoglycan turnover"/>
    <property type="evidence" value="ECO:0007669"/>
    <property type="project" value="UniProtKB-UniRule"/>
</dbReference>
<dbReference type="GO" id="GO:0008360">
    <property type="term" value="P:regulation of cell shape"/>
    <property type="evidence" value="ECO:0007669"/>
    <property type="project" value="UniProtKB-KW"/>
</dbReference>
<dbReference type="FunFam" id="3.20.20.300:FF:000001">
    <property type="entry name" value="Beta-hexosaminidase"/>
    <property type="match status" value="1"/>
</dbReference>
<dbReference type="Gene3D" id="3.20.20.300">
    <property type="entry name" value="Glycoside hydrolase, family 3, N-terminal domain"/>
    <property type="match status" value="1"/>
</dbReference>
<dbReference type="HAMAP" id="MF_00364">
    <property type="entry name" value="NagZ"/>
    <property type="match status" value="1"/>
</dbReference>
<dbReference type="InterPro" id="IPR022956">
    <property type="entry name" value="Beta_hexosaminidase_bac"/>
</dbReference>
<dbReference type="InterPro" id="IPR019800">
    <property type="entry name" value="Glyco_hydro_3_AS"/>
</dbReference>
<dbReference type="InterPro" id="IPR001764">
    <property type="entry name" value="Glyco_hydro_3_N"/>
</dbReference>
<dbReference type="InterPro" id="IPR036962">
    <property type="entry name" value="Glyco_hydro_3_N_sf"/>
</dbReference>
<dbReference type="InterPro" id="IPR017853">
    <property type="entry name" value="Glycoside_hydrolase_SF"/>
</dbReference>
<dbReference type="InterPro" id="IPR050226">
    <property type="entry name" value="NagZ_Beta-hexosaminidase"/>
</dbReference>
<dbReference type="NCBIfam" id="NF003740">
    <property type="entry name" value="PRK05337.1"/>
    <property type="match status" value="1"/>
</dbReference>
<dbReference type="PANTHER" id="PTHR30480:SF13">
    <property type="entry name" value="BETA-HEXOSAMINIDASE"/>
    <property type="match status" value="1"/>
</dbReference>
<dbReference type="PANTHER" id="PTHR30480">
    <property type="entry name" value="BETA-HEXOSAMINIDASE-RELATED"/>
    <property type="match status" value="1"/>
</dbReference>
<dbReference type="Pfam" id="PF00933">
    <property type="entry name" value="Glyco_hydro_3"/>
    <property type="match status" value="1"/>
</dbReference>
<dbReference type="SUPFAM" id="SSF51445">
    <property type="entry name" value="(Trans)glycosidases"/>
    <property type="match status" value="1"/>
</dbReference>
<dbReference type="PROSITE" id="PS00775">
    <property type="entry name" value="GLYCOSYL_HYDROL_F3"/>
    <property type="match status" value="1"/>
</dbReference>
<keyword id="KW-0131">Cell cycle</keyword>
<keyword id="KW-0132">Cell division</keyword>
<keyword id="KW-0133">Cell shape</keyword>
<keyword id="KW-0961">Cell wall biogenesis/degradation</keyword>
<keyword id="KW-0963">Cytoplasm</keyword>
<keyword id="KW-0326">Glycosidase</keyword>
<keyword id="KW-0378">Hydrolase</keyword>
<keyword id="KW-0573">Peptidoglycan synthesis</keyword>
<keyword id="KW-1185">Reference proteome</keyword>
<proteinExistence type="inferred from homology"/>
<name>NAGZ_ECO24</name>